<keyword id="KW-1185">Reference proteome</keyword>
<organism>
    <name type="scientific">Haemophilus influenzae (strain ATCC 51907 / DSM 11121 / KW20 / Rd)</name>
    <dbReference type="NCBI Taxonomy" id="71421"/>
    <lineage>
        <taxon>Bacteria</taxon>
        <taxon>Pseudomonadati</taxon>
        <taxon>Pseudomonadota</taxon>
        <taxon>Gammaproteobacteria</taxon>
        <taxon>Pasteurellales</taxon>
        <taxon>Pasteurellaceae</taxon>
        <taxon>Haemophilus</taxon>
    </lineage>
</organism>
<sequence>MRLLYVIKKENPMDQMPNCPKCQSEYVYHDSINFVCPDCGNEWDNNEIQESDDDQLIVKDSNGNLLAEGDNVLLIKDLKLKGSSEVLKKGTKFKNIRLVNGDHNVDCGKIMLKSEFLKKA</sequence>
<reference key="1">
    <citation type="journal article" date="1995" name="Science">
        <title>Whole-genome random sequencing and assembly of Haemophilus influenzae Rd.</title>
        <authorList>
            <person name="Fleischmann R.D."/>
            <person name="Adams M.D."/>
            <person name="White O."/>
            <person name="Clayton R.A."/>
            <person name="Kirkness E.F."/>
            <person name="Kerlavage A.R."/>
            <person name="Bult C.J."/>
            <person name="Tomb J.-F."/>
            <person name="Dougherty B.A."/>
            <person name="Merrick J.M."/>
            <person name="McKenney K."/>
            <person name="Sutton G.G."/>
            <person name="FitzHugh W."/>
            <person name="Fields C.A."/>
            <person name="Gocayne J.D."/>
            <person name="Scott J.D."/>
            <person name="Shirley R."/>
            <person name="Liu L.-I."/>
            <person name="Glodek A."/>
            <person name="Kelley J.M."/>
            <person name="Weidman J.F."/>
            <person name="Phillips C.A."/>
            <person name="Spriggs T."/>
            <person name="Hedblom E."/>
            <person name="Cotton M.D."/>
            <person name="Utterback T.R."/>
            <person name="Hanna M.C."/>
            <person name="Nguyen D.T."/>
            <person name="Saudek D.M."/>
            <person name="Brandon R.C."/>
            <person name="Fine L.D."/>
            <person name="Fritchman J.L."/>
            <person name="Fuhrmann J.L."/>
            <person name="Geoghagen N.S.M."/>
            <person name="Gnehm C.L."/>
            <person name="McDonald L.A."/>
            <person name="Small K.V."/>
            <person name="Fraser C.M."/>
            <person name="Smith H.O."/>
            <person name="Venter J.C."/>
        </authorList>
    </citation>
    <scope>NUCLEOTIDE SEQUENCE [LARGE SCALE GENOMIC DNA]</scope>
    <source>
        <strain>ATCC 51907 / DSM 11121 / KW20 / Rd</strain>
    </source>
</reference>
<evidence type="ECO:0000305" key="1"/>
<accession>P44479</accession>
<feature type="chain" id="PRO_0000058387" description="Protein YjdM homolog">
    <location>
        <begin position="1"/>
        <end position="120"/>
    </location>
</feature>
<proteinExistence type="inferred from homology"/>
<name>YJDM_HAEIN</name>
<gene>
    <name type="primary">yjdM</name>
    <name type="synonym">phnA</name>
    <name type="ordered locus">HI_0046</name>
</gene>
<dbReference type="EMBL" id="L42023">
    <property type="protein sequence ID" value="AAC21724.1"/>
    <property type="molecule type" value="Genomic_DNA"/>
</dbReference>
<dbReference type="PIR" id="I64044">
    <property type="entry name" value="I64044"/>
</dbReference>
<dbReference type="RefSeq" id="NP_438219.2">
    <property type="nucleotide sequence ID" value="NC_000907.1"/>
</dbReference>
<dbReference type="SMR" id="P44479"/>
<dbReference type="STRING" id="71421.HI_0046"/>
<dbReference type="EnsemblBacteria" id="AAC21724">
    <property type="protein sequence ID" value="AAC21724"/>
    <property type="gene ID" value="HI_0046"/>
</dbReference>
<dbReference type="KEGG" id="hin:HI_0046"/>
<dbReference type="PATRIC" id="fig|71421.8.peg.46"/>
<dbReference type="eggNOG" id="COG2824">
    <property type="taxonomic scope" value="Bacteria"/>
</dbReference>
<dbReference type="HOGENOM" id="CLU_134486_0_1_6"/>
<dbReference type="OrthoDB" id="9810131at2"/>
<dbReference type="PhylomeDB" id="P44479"/>
<dbReference type="Proteomes" id="UP000000579">
    <property type="component" value="Chromosome"/>
</dbReference>
<dbReference type="GO" id="GO:0005829">
    <property type="term" value="C:cytosol"/>
    <property type="evidence" value="ECO:0000318"/>
    <property type="project" value="GO_Central"/>
</dbReference>
<dbReference type="Gene3D" id="2.20.25.10">
    <property type="match status" value="1"/>
</dbReference>
<dbReference type="Gene3D" id="2.30.30.40">
    <property type="entry name" value="SH3 Domains"/>
    <property type="match status" value="1"/>
</dbReference>
<dbReference type="InterPro" id="IPR004624">
    <property type="entry name" value="YjdM"/>
</dbReference>
<dbReference type="InterPro" id="IPR013988">
    <property type="entry name" value="YjdM_C"/>
</dbReference>
<dbReference type="InterPro" id="IPR013987">
    <property type="entry name" value="YjdM_N"/>
</dbReference>
<dbReference type="NCBIfam" id="TIGR00686">
    <property type="entry name" value="phnA"/>
    <property type="match status" value="1"/>
</dbReference>
<dbReference type="PANTHER" id="PTHR30305:SF3">
    <property type="entry name" value="PROTEIN YJDM"/>
    <property type="match status" value="1"/>
</dbReference>
<dbReference type="PANTHER" id="PTHR30305">
    <property type="entry name" value="PROTEIN YJDM-RELATED"/>
    <property type="match status" value="1"/>
</dbReference>
<dbReference type="Pfam" id="PF03831">
    <property type="entry name" value="YjdM"/>
    <property type="match status" value="1"/>
</dbReference>
<dbReference type="Pfam" id="PF08274">
    <property type="entry name" value="Zn_Ribbon_YjdM"/>
    <property type="match status" value="1"/>
</dbReference>
<dbReference type="SUPFAM" id="SSF82057">
    <property type="entry name" value="Prokaryotic SH3-related domain"/>
    <property type="match status" value="1"/>
</dbReference>
<dbReference type="SUPFAM" id="SSF57783">
    <property type="entry name" value="Zinc beta-ribbon"/>
    <property type="match status" value="1"/>
</dbReference>
<comment type="similarity">
    <text evidence="1">Belongs to the YjdM family.</text>
</comment>
<protein>
    <recommendedName>
        <fullName>Protein YjdM homolog</fullName>
    </recommendedName>
</protein>